<proteinExistence type="inferred from homology"/>
<reference key="1">
    <citation type="journal article" date="1987" name="J. Interferon Res.">
        <title>Structure and expression in Escherichia coli of canine interferon-alpha genes.</title>
        <authorList>
            <person name="Himmler A."/>
            <person name="Hauptmann R."/>
            <person name="Adolf G.R."/>
            <person name="Swetly P."/>
        </authorList>
    </citation>
    <scope>NUCLEOTIDE SEQUENCE [GENOMIC DNA]</scope>
    <source>
        <tissue>Liver</tissue>
    </source>
</reference>
<organism>
    <name type="scientific">Canis lupus familiaris</name>
    <name type="common">Dog</name>
    <name type="synonym">Canis familiaris</name>
    <dbReference type="NCBI Taxonomy" id="9615"/>
    <lineage>
        <taxon>Eukaryota</taxon>
        <taxon>Metazoa</taxon>
        <taxon>Chordata</taxon>
        <taxon>Craniata</taxon>
        <taxon>Vertebrata</taxon>
        <taxon>Euteleostomi</taxon>
        <taxon>Mammalia</taxon>
        <taxon>Eutheria</taxon>
        <taxon>Laurasiatheria</taxon>
        <taxon>Carnivora</taxon>
        <taxon>Caniformia</taxon>
        <taxon>Canidae</taxon>
        <taxon>Canis</taxon>
    </lineage>
</organism>
<dbReference type="EMBL" id="M28626">
    <property type="protein sequence ID" value="AAA30852.1"/>
    <property type="molecule type" value="Genomic_DNA"/>
</dbReference>
<dbReference type="PIR" id="I46206">
    <property type="entry name" value="I46206"/>
</dbReference>
<dbReference type="SMR" id="O97945"/>
<dbReference type="FunCoup" id="O97945">
    <property type="interactions" value="13"/>
</dbReference>
<dbReference type="STRING" id="9615.ENSCAFP00000045894"/>
<dbReference type="PaxDb" id="9615-ENSCAFP00000045894"/>
<dbReference type="InParanoid" id="O97945"/>
<dbReference type="Proteomes" id="UP000002254">
    <property type="component" value="Unplaced"/>
</dbReference>
<dbReference type="Proteomes" id="UP000694429">
    <property type="component" value="Unplaced"/>
</dbReference>
<dbReference type="Proteomes" id="UP000694542">
    <property type="component" value="Unplaced"/>
</dbReference>
<dbReference type="Proteomes" id="UP000805418">
    <property type="component" value="Unplaced"/>
</dbReference>
<dbReference type="GO" id="GO:0005615">
    <property type="term" value="C:extracellular space"/>
    <property type="evidence" value="ECO:0000318"/>
    <property type="project" value="GO_Central"/>
</dbReference>
<dbReference type="GO" id="GO:0005125">
    <property type="term" value="F:cytokine activity"/>
    <property type="evidence" value="ECO:0000318"/>
    <property type="project" value="GO_Central"/>
</dbReference>
<dbReference type="GO" id="GO:0005132">
    <property type="term" value="F:type I interferon receptor binding"/>
    <property type="evidence" value="ECO:0000318"/>
    <property type="project" value="GO_Central"/>
</dbReference>
<dbReference type="GO" id="GO:0002250">
    <property type="term" value="P:adaptive immune response"/>
    <property type="evidence" value="ECO:0000318"/>
    <property type="project" value="GO_Central"/>
</dbReference>
<dbReference type="GO" id="GO:0002312">
    <property type="term" value="P:B cell activation involved in immune response"/>
    <property type="evidence" value="ECO:0000318"/>
    <property type="project" value="GO_Central"/>
</dbReference>
<dbReference type="GO" id="GO:0051607">
    <property type="term" value="P:defense response to virus"/>
    <property type="evidence" value="ECO:0007669"/>
    <property type="project" value="UniProtKB-KW"/>
</dbReference>
<dbReference type="GO" id="GO:0006959">
    <property type="term" value="P:humoral immune response"/>
    <property type="evidence" value="ECO:0000318"/>
    <property type="project" value="GO_Central"/>
</dbReference>
<dbReference type="GO" id="GO:0002323">
    <property type="term" value="P:natural killer cell activation involved in immune response"/>
    <property type="evidence" value="ECO:0000318"/>
    <property type="project" value="GO_Central"/>
</dbReference>
<dbReference type="GO" id="GO:0043330">
    <property type="term" value="P:response to exogenous dsRNA"/>
    <property type="evidence" value="ECO:0000318"/>
    <property type="project" value="GO_Central"/>
</dbReference>
<dbReference type="GO" id="GO:0002286">
    <property type="term" value="P:T cell activation involved in immune response"/>
    <property type="evidence" value="ECO:0000318"/>
    <property type="project" value="GO_Central"/>
</dbReference>
<dbReference type="GO" id="GO:0060337">
    <property type="term" value="P:type I interferon-mediated signaling pathway"/>
    <property type="evidence" value="ECO:0000318"/>
    <property type="project" value="GO_Central"/>
</dbReference>
<dbReference type="CDD" id="cd00095">
    <property type="entry name" value="IFab"/>
    <property type="match status" value="1"/>
</dbReference>
<dbReference type="FunFam" id="1.20.1250.10:FF:000001">
    <property type="entry name" value="Interferon alpha"/>
    <property type="match status" value="1"/>
</dbReference>
<dbReference type="Gene3D" id="1.20.1250.10">
    <property type="match status" value="1"/>
</dbReference>
<dbReference type="InterPro" id="IPR009079">
    <property type="entry name" value="4_helix_cytokine-like_core"/>
</dbReference>
<dbReference type="InterPro" id="IPR000471">
    <property type="entry name" value="Interferon_alpha/beta/delta"/>
</dbReference>
<dbReference type="PANTHER" id="PTHR11691:SF60">
    <property type="entry name" value="INTERFERON ALPHA-5"/>
    <property type="match status" value="1"/>
</dbReference>
<dbReference type="PANTHER" id="PTHR11691">
    <property type="entry name" value="TYPE I INTERFERON"/>
    <property type="match status" value="1"/>
</dbReference>
<dbReference type="Pfam" id="PF00143">
    <property type="entry name" value="Interferon"/>
    <property type="match status" value="1"/>
</dbReference>
<dbReference type="PRINTS" id="PR00266">
    <property type="entry name" value="INTERFERONAB"/>
</dbReference>
<dbReference type="SMART" id="SM00076">
    <property type="entry name" value="IFabd"/>
    <property type="match status" value="1"/>
</dbReference>
<dbReference type="SUPFAM" id="SSF47266">
    <property type="entry name" value="4-helical cytokines"/>
    <property type="match status" value="1"/>
</dbReference>
<dbReference type="PROSITE" id="PS00252">
    <property type="entry name" value="INTERFERON_A_B_D"/>
    <property type="match status" value="1"/>
</dbReference>
<comment type="function">
    <text>Produced by macrophages, IFN-alpha have antiviral activities. Interferon stimulates the production of two enzymes: a protein kinase and an oligoadenylate synthetase.</text>
</comment>
<comment type="subcellular location">
    <subcellularLocation>
        <location>Secreted</location>
    </subcellularLocation>
</comment>
<comment type="similarity">
    <text evidence="3">Belongs to the alpha/beta interferon family.</text>
</comment>
<sequence>MALPCSFSVALVLLSCHSLCCLACHLPDTHSLRNWRVLTLLGQMRRLSASSCDHYTTDFAFPKELFDGQRLQEAQALSVVHVMTQKVFHLFCTNTSSAPWNMTLLEELCSGLSEQLDDLDACPLQEAGLAETPLMHEDSTLRTYFQRISLYLQDRNHSPCAWEMVRAEIGRSFFSLTILQERVRRRK</sequence>
<name>IFNA3_CANLF</name>
<keyword id="KW-0051">Antiviral defense</keyword>
<keyword id="KW-0202">Cytokine</keyword>
<keyword id="KW-1015">Disulfide bond</keyword>
<keyword id="KW-0325">Glycoprotein</keyword>
<keyword id="KW-1185">Reference proteome</keyword>
<keyword id="KW-0964">Secreted</keyword>
<keyword id="KW-0732">Signal</keyword>
<feature type="signal peptide" evidence="1">
    <location>
        <begin position="1"/>
        <end position="23"/>
    </location>
</feature>
<feature type="chain" id="PRO_0000016393" description="Interferon alpha-3">
    <location>
        <begin position="24"/>
        <end position="187"/>
    </location>
</feature>
<feature type="glycosylation site" description="N-linked (GlcNAc...) asparagine" evidence="2">
    <location>
        <position position="94"/>
    </location>
</feature>
<feature type="glycosylation site" description="N-linked (GlcNAc...) asparagine" evidence="2">
    <location>
        <position position="101"/>
    </location>
</feature>
<feature type="disulfide bond" evidence="1">
    <location>
        <begin position="24"/>
        <end position="122"/>
    </location>
</feature>
<feature type="disulfide bond" evidence="1">
    <location>
        <begin position="52"/>
        <end position="160"/>
    </location>
</feature>
<accession>O97945</accession>
<protein>
    <recommendedName>
        <fullName>Interferon alpha-3</fullName>
        <shortName>IFN-alpha-3</shortName>
    </recommendedName>
</protein>
<evidence type="ECO:0000250" key="1"/>
<evidence type="ECO:0000255" key="2"/>
<evidence type="ECO:0000305" key="3"/>